<feature type="initiator methionine" description="Removed" evidence="3 6 7">
    <location>
        <position position="1"/>
    </location>
</feature>
<feature type="chain" id="PRO_0000164067" description="Superoxide dismutase [Cu-Zn]">
    <location>
        <begin position="2"/>
        <end position="154"/>
    </location>
</feature>
<feature type="binding site" evidence="1">
    <location>
        <position position="47"/>
    </location>
    <ligand>
        <name>Cu cation</name>
        <dbReference type="ChEBI" id="CHEBI:23378"/>
        <note>catalytic</note>
    </ligand>
</feature>
<feature type="binding site" evidence="1">
    <location>
        <position position="49"/>
    </location>
    <ligand>
        <name>Cu cation</name>
        <dbReference type="ChEBI" id="CHEBI:23378"/>
        <note>catalytic</note>
    </ligand>
</feature>
<feature type="binding site" evidence="1">
    <location>
        <position position="64"/>
    </location>
    <ligand>
        <name>Cu cation</name>
        <dbReference type="ChEBI" id="CHEBI:23378"/>
        <note>catalytic</note>
    </ligand>
</feature>
<feature type="binding site" evidence="1">
    <location>
        <position position="64"/>
    </location>
    <ligand>
        <name>Zn(2+)</name>
        <dbReference type="ChEBI" id="CHEBI:29105"/>
        <note>structural</note>
    </ligand>
</feature>
<feature type="binding site" evidence="1">
    <location>
        <position position="72"/>
    </location>
    <ligand>
        <name>Zn(2+)</name>
        <dbReference type="ChEBI" id="CHEBI:29105"/>
        <note>structural</note>
    </ligand>
</feature>
<feature type="binding site" evidence="1">
    <location>
        <position position="81"/>
    </location>
    <ligand>
        <name>Zn(2+)</name>
        <dbReference type="ChEBI" id="CHEBI:29105"/>
        <note>structural</note>
    </ligand>
</feature>
<feature type="binding site" evidence="1">
    <location>
        <position position="84"/>
    </location>
    <ligand>
        <name>Zn(2+)</name>
        <dbReference type="ChEBI" id="CHEBI:29105"/>
        <note>structural</note>
    </ligand>
</feature>
<feature type="binding site" evidence="1">
    <location>
        <position position="121"/>
    </location>
    <ligand>
        <name>Cu cation</name>
        <dbReference type="ChEBI" id="CHEBI:23378"/>
        <note>catalytic</note>
    </ligand>
</feature>
<feature type="modified residue" description="N-acetylalanine" evidence="3">
    <location>
        <position position="2"/>
    </location>
</feature>
<feature type="modified residue" description="N6-succinyllysine" evidence="4">
    <location>
        <position position="4"/>
    </location>
</feature>
<feature type="modified residue" description="N6-succinyllysine" evidence="4">
    <location>
        <position position="10"/>
    </location>
</feature>
<feature type="modified residue" description="N6-succinyllysine" evidence="4">
    <location>
        <position position="92"/>
    </location>
</feature>
<feature type="modified residue" description="Phosphoserine" evidence="11">
    <location>
        <position position="99"/>
    </location>
</feature>
<feature type="modified residue" description="Phosphoserine" evidence="11">
    <location>
        <position position="106"/>
    </location>
</feature>
<feature type="modified residue" description="Phosphoserine" evidence="11">
    <location>
        <position position="108"/>
    </location>
</feature>
<feature type="modified residue" description="N6-acetyllysine; alternate" evidence="2">
    <location>
        <position position="123"/>
    </location>
</feature>
<feature type="modified residue" description="N6-succinyllysine; alternate" evidence="2">
    <location>
        <position position="123"/>
    </location>
</feature>
<feature type="modified residue" description="N6-acetyllysine; alternate" evidence="4">
    <location>
        <position position="137"/>
    </location>
</feature>
<feature type="modified residue" description="N6-succinyllysine; alternate" evidence="4">
    <location>
        <position position="137"/>
    </location>
</feature>
<feature type="lipid moiety-binding region" description="S-palmitoyl cysteine" evidence="1">
    <location>
        <position position="7"/>
    </location>
</feature>
<feature type="disulfide bond" evidence="1">
    <location>
        <begin position="58"/>
        <end position="147"/>
    </location>
</feature>
<keyword id="KW-0007">Acetylation</keyword>
<keyword id="KW-0049">Antioxidant</keyword>
<keyword id="KW-0186">Copper</keyword>
<keyword id="KW-0963">Cytoplasm</keyword>
<keyword id="KW-0903">Direct protein sequencing</keyword>
<keyword id="KW-1015">Disulfide bond</keyword>
<keyword id="KW-0449">Lipoprotein</keyword>
<keyword id="KW-0479">Metal-binding</keyword>
<keyword id="KW-0539">Nucleus</keyword>
<keyword id="KW-0560">Oxidoreductase</keyword>
<keyword id="KW-0564">Palmitate</keyword>
<keyword id="KW-0597">Phosphoprotein</keyword>
<keyword id="KW-1185">Reference proteome</keyword>
<keyword id="KW-0862">Zinc</keyword>
<evidence type="ECO:0000250" key="1"/>
<evidence type="ECO:0000250" key="2">
    <source>
        <dbReference type="UniProtKB" id="P00441"/>
    </source>
</evidence>
<evidence type="ECO:0000250" key="3">
    <source>
        <dbReference type="UniProtKB" id="P00442"/>
    </source>
</evidence>
<evidence type="ECO:0000250" key="4">
    <source>
        <dbReference type="UniProtKB" id="P08228"/>
    </source>
</evidence>
<evidence type="ECO:0000269" key="5">
    <source>
    </source>
</evidence>
<evidence type="ECO:0000269" key="6">
    <source>
    </source>
</evidence>
<evidence type="ECO:0000269" key="7">
    <source>
    </source>
</evidence>
<evidence type="ECO:0000305" key="8"/>
<evidence type="ECO:0000305" key="9">
    <source>
    </source>
</evidence>
<evidence type="ECO:0000312" key="10">
    <source>
        <dbReference type="RGD" id="3731"/>
    </source>
</evidence>
<evidence type="ECO:0007744" key="11">
    <source>
    </source>
</evidence>
<name>SODC_RAT</name>
<organism>
    <name type="scientific">Rattus norvegicus</name>
    <name type="common">Rat</name>
    <dbReference type="NCBI Taxonomy" id="10116"/>
    <lineage>
        <taxon>Eukaryota</taxon>
        <taxon>Metazoa</taxon>
        <taxon>Chordata</taxon>
        <taxon>Craniata</taxon>
        <taxon>Vertebrata</taxon>
        <taxon>Euteleostomi</taxon>
        <taxon>Mammalia</taxon>
        <taxon>Eutheria</taxon>
        <taxon>Euarchontoglires</taxon>
        <taxon>Glires</taxon>
        <taxon>Rodentia</taxon>
        <taxon>Myomorpha</taxon>
        <taxon>Muroidea</taxon>
        <taxon>Muridae</taxon>
        <taxon>Murinae</taxon>
        <taxon>Rattus</taxon>
    </lineage>
</organism>
<protein>
    <recommendedName>
        <fullName evidence="8">Superoxide dismutase [Cu-Zn]</fullName>
        <ecNumber evidence="9">1.15.1.1</ecNumber>
    </recommendedName>
</protein>
<dbReference type="EC" id="1.15.1.1" evidence="9"/>
<dbReference type="EMBL" id="Y00404">
    <property type="protein sequence ID" value="CAA68465.1"/>
    <property type="molecule type" value="mRNA"/>
</dbReference>
<dbReference type="EMBL" id="M25157">
    <property type="protein sequence ID" value="AAA42160.1"/>
    <property type="status" value="ALT_INIT"/>
    <property type="molecule type" value="mRNA"/>
</dbReference>
<dbReference type="EMBL" id="X05634">
    <property type="protein sequence ID" value="CAA29121.1"/>
    <property type="molecule type" value="mRNA"/>
</dbReference>
<dbReference type="EMBL" id="Z21917">
    <property type="protein sequence ID" value="CAA79925.1"/>
    <property type="status" value="ALT_INIT"/>
    <property type="molecule type" value="Genomic_DNA"/>
</dbReference>
<dbReference type="EMBL" id="Z21918">
    <property type="protein sequence ID" value="CAA79925.1"/>
    <property type="status" value="JOINED"/>
    <property type="molecule type" value="Genomic_DNA"/>
</dbReference>
<dbReference type="EMBL" id="Z21919">
    <property type="protein sequence ID" value="CAA79925.1"/>
    <property type="status" value="JOINED"/>
    <property type="molecule type" value="Genomic_DNA"/>
</dbReference>
<dbReference type="EMBL" id="Z21920">
    <property type="protein sequence ID" value="CAA79925.1"/>
    <property type="status" value="JOINED"/>
    <property type="molecule type" value="Genomic_DNA"/>
</dbReference>
<dbReference type="EMBL" id="BC082800">
    <property type="protein sequence ID" value="AAH82800.1"/>
    <property type="molecule type" value="mRNA"/>
</dbReference>
<dbReference type="PIR" id="JC1192">
    <property type="entry name" value="JC1192"/>
</dbReference>
<dbReference type="RefSeq" id="NP_058746.1">
    <property type="nucleotide sequence ID" value="NM_017050.1"/>
</dbReference>
<dbReference type="SMR" id="P07632"/>
<dbReference type="BioGRID" id="246910">
    <property type="interactions" value="4"/>
</dbReference>
<dbReference type="FunCoup" id="P07632">
    <property type="interactions" value="2039"/>
</dbReference>
<dbReference type="IntAct" id="P07632">
    <property type="interactions" value="1"/>
</dbReference>
<dbReference type="MINT" id="P07632"/>
<dbReference type="STRING" id="10116.ENSRNOP00000002885"/>
<dbReference type="CarbonylDB" id="P07632"/>
<dbReference type="GlyGen" id="P07632">
    <property type="glycosylation" value="1 site, 1 O-linked glycan (1 site)"/>
</dbReference>
<dbReference type="iPTMnet" id="P07632"/>
<dbReference type="PhosphoSitePlus" id="P07632"/>
<dbReference type="SwissPalm" id="P07632"/>
<dbReference type="jPOST" id="P07632"/>
<dbReference type="PaxDb" id="10116-ENSRNOP00000002885"/>
<dbReference type="GeneID" id="24786"/>
<dbReference type="KEGG" id="rno:24786"/>
<dbReference type="UCSC" id="RGD:3731">
    <property type="organism name" value="rat"/>
</dbReference>
<dbReference type="AGR" id="RGD:3731"/>
<dbReference type="CTD" id="6647"/>
<dbReference type="RGD" id="3731">
    <property type="gene designation" value="Sod1"/>
</dbReference>
<dbReference type="VEuPathDB" id="HostDB:ENSRNOG00000002115"/>
<dbReference type="eggNOG" id="KOG0441">
    <property type="taxonomic scope" value="Eukaryota"/>
</dbReference>
<dbReference type="HOGENOM" id="CLU_056632_4_1_1"/>
<dbReference type="InParanoid" id="P07632"/>
<dbReference type="OrthoDB" id="12711at9989"/>
<dbReference type="PhylomeDB" id="P07632"/>
<dbReference type="TreeFam" id="TF105131"/>
<dbReference type="BRENDA" id="1.15.1.1">
    <property type="organism ID" value="5301"/>
</dbReference>
<dbReference type="Reactome" id="R-RNO-114608">
    <property type="pathway name" value="Platelet degranulation"/>
</dbReference>
<dbReference type="Reactome" id="R-RNO-3299685">
    <property type="pathway name" value="Detoxification of Reactive Oxygen Species"/>
</dbReference>
<dbReference type="PRO" id="PR:P07632"/>
<dbReference type="Proteomes" id="UP000002494">
    <property type="component" value="Chromosome 11"/>
</dbReference>
<dbReference type="Bgee" id="ENSRNOG00000002115">
    <property type="expression patterns" value="Expressed in kidney and 20 other cell types or tissues"/>
</dbReference>
<dbReference type="GO" id="GO:1904115">
    <property type="term" value="C:axon cytoplasm"/>
    <property type="evidence" value="ECO:0007669"/>
    <property type="project" value="GOC"/>
</dbReference>
<dbReference type="GO" id="GO:0005737">
    <property type="term" value="C:cytoplasm"/>
    <property type="evidence" value="ECO:0000250"/>
    <property type="project" value="UniProtKB"/>
</dbReference>
<dbReference type="GO" id="GO:0031410">
    <property type="term" value="C:cytoplasmic vesicle"/>
    <property type="evidence" value="ECO:0000250"/>
    <property type="project" value="UniProtKB"/>
</dbReference>
<dbReference type="GO" id="GO:0005829">
    <property type="term" value="C:cytosol"/>
    <property type="evidence" value="ECO:0000250"/>
    <property type="project" value="UniProtKB"/>
</dbReference>
<dbReference type="GO" id="GO:0032839">
    <property type="term" value="C:dendrite cytoplasm"/>
    <property type="evidence" value="ECO:0000250"/>
    <property type="project" value="UniProtKB"/>
</dbReference>
<dbReference type="GO" id="GO:0031045">
    <property type="term" value="C:dense core granule"/>
    <property type="evidence" value="ECO:0000314"/>
    <property type="project" value="RGD"/>
</dbReference>
<dbReference type="GO" id="GO:0005576">
    <property type="term" value="C:extracellular region"/>
    <property type="evidence" value="ECO:0000314"/>
    <property type="project" value="RGD"/>
</dbReference>
<dbReference type="GO" id="GO:0005615">
    <property type="term" value="C:extracellular space"/>
    <property type="evidence" value="ECO:0000266"/>
    <property type="project" value="RGD"/>
</dbReference>
<dbReference type="GO" id="GO:0005764">
    <property type="term" value="C:lysosome"/>
    <property type="evidence" value="ECO:0000314"/>
    <property type="project" value="CACAO"/>
</dbReference>
<dbReference type="GO" id="GO:0005739">
    <property type="term" value="C:mitochondrion"/>
    <property type="evidence" value="ECO:0000250"/>
    <property type="project" value="UniProtKB"/>
</dbReference>
<dbReference type="GO" id="GO:0043025">
    <property type="term" value="C:neuronal cell body"/>
    <property type="evidence" value="ECO:0000314"/>
    <property type="project" value="RGD"/>
</dbReference>
<dbReference type="GO" id="GO:0005654">
    <property type="term" value="C:nucleoplasm"/>
    <property type="evidence" value="ECO:0007669"/>
    <property type="project" value="Ensembl"/>
</dbReference>
<dbReference type="GO" id="GO:0005634">
    <property type="term" value="C:nucleus"/>
    <property type="evidence" value="ECO:0000250"/>
    <property type="project" value="UniProtKB"/>
</dbReference>
<dbReference type="GO" id="GO:0005777">
    <property type="term" value="C:peroxisome"/>
    <property type="evidence" value="ECO:0000314"/>
    <property type="project" value="UniProtKB"/>
</dbReference>
<dbReference type="GO" id="GO:0005886">
    <property type="term" value="C:plasma membrane"/>
    <property type="evidence" value="ECO:0000266"/>
    <property type="project" value="RGD"/>
</dbReference>
<dbReference type="GO" id="GO:0032991">
    <property type="term" value="C:protein-containing complex"/>
    <property type="evidence" value="ECO:0000314"/>
    <property type="project" value="RGD"/>
</dbReference>
<dbReference type="GO" id="GO:0030141">
    <property type="term" value="C:secretory granule"/>
    <property type="evidence" value="ECO:0000314"/>
    <property type="project" value="RGD"/>
</dbReference>
<dbReference type="GO" id="GO:0005507">
    <property type="term" value="F:copper ion binding"/>
    <property type="evidence" value="ECO:0000315"/>
    <property type="project" value="RGD"/>
</dbReference>
<dbReference type="GO" id="GO:0019899">
    <property type="term" value="F:enzyme binding"/>
    <property type="evidence" value="ECO:0000353"/>
    <property type="project" value="RGD"/>
</dbReference>
<dbReference type="GO" id="GO:0042802">
    <property type="term" value="F:identical protein binding"/>
    <property type="evidence" value="ECO:0000266"/>
    <property type="project" value="RGD"/>
</dbReference>
<dbReference type="GO" id="GO:0042803">
    <property type="term" value="F:protein homodimerization activity"/>
    <property type="evidence" value="ECO:0000266"/>
    <property type="project" value="RGD"/>
</dbReference>
<dbReference type="GO" id="GO:0030346">
    <property type="term" value="F:protein phosphatase 2B binding"/>
    <property type="evidence" value="ECO:0000314"/>
    <property type="project" value="RGD"/>
</dbReference>
<dbReference type="GO" id="GO:0051087">
    <property type="term" value="F:protein-folding chaperone binding"/>
    <property type="evidence" value="ECO:0000250"/>
    <property type="project" value="UniProtKB"/>
</dbReference>
<dbReference type="GO" id="GO:0031267">
    <property type="term" value="F:small GTPase binding"/>
    <property type="evidence" value="ECO:0000266"/>
    <property type="project" value="RGD"/>
</dbReference>
<dbReference type="GO" id="GO:0004784">
    <property type="term" value="F:superoxide dismutase activity"/>
    <property type="evidence" value="ECO:0000314"/>
    <property type="project" value="RGD"/>
</dbReference>
<dbReference type="GO" id="GO:0008270">
    <property type="term" value="F:zinc ion binding"/>
    <property type="evidence" value="ECO:0000250"/>
    <property type="project" value="UniProtKB"/>
</dbReference>
<dbReference type="GO" id="GO:0099610">
    <property type="term" value="P:action potential initiation"/>
    <property type="evidence" value="ECO:0000266"/>
    <property type="project" value="RGD"/>
</dbReference>
<dbReference type="GO" id="GO:0008089">
    <property type="term" value="P:anterograde axonal transport"/>
    <property type="evidence" value="ECO:0000266"/>
    <property type="project" value="RGD"/>
</dbReference>
<dbReference type="GO" id="GO:0006915">
    <property type="term" value="P:apoptotic process"/>
    <property type="evidence" value="ECO:0000266"/>
    <property type="project" value="RGD"/>
</dbReference>
<dbReference type="GO" id="GO:0060088">
    <property type="term" value="P:auditory receptor cell stereocilium organization"/>
    <property type="evidence" value="ECO:0000250"/>
    <property type="project" value="UniProtKB"/>
</dbReference>
<dbReference type="GO" id="GO:0071318">
    <property type="term" value="P:cellular response to ATP"/>
    <property type="evidence" value="ECO:0000270"/>
    <property type="project" value="RGD"/>
</dbReference>
<dbReference type="GO" id="GO:0071276">
    <property type="term" value="P:cellular response to cadmium ion"/>
    <property type="evidence" value="ECO:0000270"/>
    <property type="project" value="RGD"/>
</dbReference>
<dbReference type="GO" id="GO:0034599">
    <property type="term" value="P:cellular response to oxidative stress"/>
    <property type="evidence" value="ECO:0000270"/>
    <property type="project" value="RGD"/>
</dbReference>
<dbReference type="GO" id="GO:0035865">
    <property type="term" value="P:cellular response to potassium ion"/>
    <property type="evidence" value="ECO:0000270"/>
    <property type="project" value="RGD"/>
</dbReference>
<dbReference type="GO" id="GO:0008340">
    <property type="term" value="P:determination of adult lifespan"/>
    <property type="evidence" value="ECO:0000266"/>
    <property type="project" value="RGD"/>
</dbReference>
<dbReference type="GO" id="GO:0035234">
    <property type="term" value="P:ectopic germ cell programmed cell death"/>
    <property type="evidence" value="ECO:0000266"/>
    <property type="project" value="RGD"/>
</dbReference>
<dbReference type="GO" id="GO:0007566">
    <property type="term" value="P:embryo implantation"/>
    <property type="evidence" value="ECO:0000250"/>
    <property type="project" value="UniProtKB"/>
</dbReference>
<dbReference type="GO" id="GO:0010467">
    <property type="term" value="P:gene expression"/>
    <property type="evidence" value="ECO:0000266"/>
    <property type="project" value="RGD"/>
</dbReference>
<dbReference type="GO" id="GO:0006749">
    <property type="term" value="P:glutathione metabolic process"/>
    <property type="evidence" value="ECO:0000250"/>
    <property type="project" value="UniProtKB"/>
</dbReference>
<dbReference type="GO" id="GO:0060047">
    <property type="term" value="P:heart contraction"/>
    <property type="evidence" value="ECO:0000250"/>
    <property type="project" value="UniProtKB"/>
</dbReference>
<dbReference type="GO" id="GO:0050665">
    <property type="term" value="P:hydrogen peroxide biosynthetic process"/>
    <property type="evidence" value="ECO:0000314"/>
    <property type="project" value="RGD"/>
</dbReference>
<dbReference type="GO" id="GO:0006879">
    <property type="term" value="P:intracellular iron ion homeostasis"/>
    <property type="evidence" value="ECO:0000250"/>
    <property type="project" value="UniProtKB"/>
</dbReference>
<dbReference type="GO" id="GO:0007626">
    <property type="term" value="P:locomotory behavior"/>
    <property type="evidence" value="ECO:0000250"/>
    <property type="project" value="UniProtKB"/>
</dbReference>
<dbReference type="GO" id="GO:0046716">
    <property type="term" value="P:muscle cell cellular homeostasis"/>
    <property type="evidence" value="ECO:0000250"/>
    <property type="project" value="UniProtKB"/>
</dbReference>
<dbReference type="GO" id="GO:0002262">
    <property type="term" value="P:myeloid cell homeostasis"/>
    <property type="evidence" value="ECO:0000250"/>
    <property type="project" value="UniProtKB"/>
</dbReference>
<dbReference type="GO" id="GO:0043066">
    <property type="term" value="P:negative regulation of apoptotic process"/>
    <property type="evidence" value="ECO:0000315"/>
    <property type="project" value="RGD"/>
</dbReference>
<dbReference type="GO" id="GO:0051093">
    <property type="term" value="P:negative regulation of developmental process"/>
    <property type="evidence" value="ECO:0000266"/>
    <property type="project" value="RGD"/>
</dbReference>
<dbReference type="GO" id="GO:0050728">
    <property type="term" value="P:negative regulation of inflammatory response"/>
    <property type="evidence" value="ECO:0000266"/>
    <property type="project" value="RGD"/>
</dbReference>
<dbReference type="GO" id="GO:0043524">
    <property type="term" value="P:negative regulation of neuron apoptotic process"/>
    <property type="evidence" value="ECO:0000250"/>
    <property type="project" value="UniProtKB"/>
</dbReference>
<dbReference type="GO" id="GO:2000242">
    <property type="term" value="P:negative regulation of reproductive process"/>
    <property type="evidence" value="ECO:0000266"/>
    <property type="project" value="RGD"/>
</dbReference>
<dbReference type="GO" id="GO:0060052">
    <property type="term" value="P:neurofilament cytoskeleton organization"/>
    <property type="evidence" value="ECO:0000250"/>
    <property type="project" value="UniProtKB"/>
</dbReference>
<dbReference type="GO" id="GO:0019228">
    <property type="term" value="P:neuronal action potential"/>
    <property type="evidence" value="ECO:0000266"/>
    <property type="project" value="RGD"/>
</dbReference>
<dbReference type="GO" id="GO:0001541">
    <property type="term" value="P:ovarian follicle development"/>
    <property type="evidence" value="ECO:0000250"/>
    <property type="project" value="UniProtKB"/>
</dbReference>
<dbReference type="GO" id="GO:0032287">
    <property type="term" value="P:peripheral nervous system myelin maintenance"/>
    <property type="evidence" value="ECO:0000250"/>
    <property type="project" value="UniProtKB"/>
</dbReference>
<dbReference type="GO" id="GO:0043085">
    <property type="term" value="P:positive regulation of catalytic activity"/>
    <property type="evidence" value="ECO:0000314"/>
    <property type="project" value="UniProtKB"/>
</dbReference>
<dbReference type="GO" id="GO:0001819">
    <property type="term" value="P:positive regulation of cytokine production"/>
    <property type="evidence" value="ECO:0000250"/>
    <property type="project" value="UniProtKB"/>
</dbReference>
<dbReference type="GO" id="GO:0043410">
    <property type="term" value="P:positive regulation of MAPK cascade"/>
    <property type="evidence" value="ECO:0000250"/>
    <property type="project" value="UniProtKB"/>
</dbReference>
<dbReference type="GO" id="GO:1902177">
    <property type="term" value="P:positive regulation of oxidative stress-induced intrinsic apoptotic signaling pathway"/>
    <property type="evidence" value="ECO:0000266"/>
    <property type="project" value="RGD"/>
</dbReference>
<dbReference type="GO" id="GO:0050766">
    <property type="term" value="P:positive regulation of phagocytosis"/>
    <property type="evidence" value="ECO:0000266"/>
    <property type="project" value="RGD"/>
</dbReference>
<dbReference type="GO" id="GO:0032930">
    <property type="term" value="P:positive regulation of superoxide anion generation"/>
    <property type="evidence" value="ECO:0000266"/>
    <property type="project" value="RGD"/>
</dbReference>
<dbReference type="GO" id="GO:0072593">
    <property type="term" value="P:reactive oxygen species metabolic process"/>
    <property type="evidence" value="ECO:0000250"/>
    <property type="project" value="UniProtKB"/>
</dbReference>
<dbReference type="GO" id="GO:0008217">
    <property type="term" value="P:regulation of blood pressure"/>
    <property type="evidence" value="ECO:0000250"/>
    <property type="project" value="UniProtKB"/>
</dbReference>
<dbReference type="GO" id="GO:0051881">
    <property type="term" value="P:regulation of mitochondrial membrane potential"/>
    <property type="evidence" value="ECO:0000250"/>
    <property type="project" value="UniProtKB"/>
</dbReference>
<dbReference type="GO" id="GO:0040014">
    <property type="term" value="P:regulation of multicellular organism growth"/>
    <property type="evidence" value="ECO:0000250"/>
    <property type="project" value="UniProtKB"/>
</dbReference>
<dbReference type="GO" id="GO:0060087">
    <property type="term" value="P:relaxation of vascular associated smooth muscle"/>
    <property type="evidence" value="ECO:0000250"/>
    <property type="project" value="UniProtKB"/>
</dbReference>
<dbReference type="GO" id="GO:0019430">
    <property type="term" value="P:removal of superoxide radicals"/>
    <property type="evidence" value="ECO:0000314"/>
    <property type="project" value="RGD"/>
</dbReference>
<dbReference type="GO" id="GO:0001975">
    <property type="term" value="P:response to amphetamine"/>
    <property type="evidence" value="ECO:0000270"/>
    <property type="project" value="RGD"/>
</dbReference>
<dbReference type="GO" id="GO:0097332">
    <property type="term" value="P:response to antipsychotic drug"/>
    <property type="evidence" value="ECO:0000270"/>
    <property type="project" value="RGD"/>
</dbReference>
<dbReference type="GO" id="GO:0048678">
    <property type="term" value="P:response to axon injury"/>
    <property type="evidence" value="ECO:0000250"/>
    <property type="project" value="UniProtKB"/>
</dbReference>
<dbReference type="GO" id="GO:0034465">
    <property type="term" value="P:response to carbon monoxide"/>
    <property type="evidence" value="ECO:0000270"/>
    <property type="project" value="RGD"/>
</dbReference>
<dbReference type="GO" id="GO:0046688">
    <property type="term" value="P:response to copper ion"/>
    <property type="evidence" value="ECO:0000315"/>
    <property type="project" value="RGD"/>
</dbReference>
<dbReference type="GO" id="GO:0045471">
    <property type="term" value="P:response to ethanol"/>
    <property type="evidence" value="ECO:0000250"/>
    <property type="project" value="UniProtKB"/>
</dbReference>
<dbReference type="GO" id="GO:0009408">
    <property type="term" value="P:response to heat"/>
    <property type="evidence" value="ECO:0000250"/>
    <property type="project" value="UniProtKB"/>
</dbReference>
<dbReference type="GO" id="GO:0042542">
    <property type="term" value="P:response to hydrogen peroxide"/>
    <property type="evidence" value="ECO:0000250"/>
    <property type="project" value="UniProtKB"/>
</dbReference>
<dbReference type="GO" id="GO:0031667">
    <property type="term" value="P:response to nutrient levels"/>
    <property type="evidence" value="ECO:0000314"/>
    <property type="project" value="RGD"/>
</dbReference>
<dbReference type="GO" id="GO:0006979">
    <property type="term" value="P:response to oxidative stress"/>
    <property type="evidence" value="ECO:0000315"/>
    <property type="project" value="RGD"/>
</dbReference>
<dbReference type="GO" id="GO:0000302">
    <property type="term" value="P:response to reactive oxygen species"/>
    <property type="evidence" value="ECO:0000266"/>
    <property type="project" value="RGD"/>
</dbReference>
<dbReference type="GO" id="GO:0000303">
    <property type="term" value="P:response to superoxide"/>
    <property type="evidence" value="ECO:0000250"/>
    <property type="project" value="UniProtKB"/>
</dbReference>
<dbReference type="GO" id="GO:0009410">
    <property type="term" value="P:response to xenobiotic stimulus"/>
    <property type="evidence" value="ECO:0000266"/>
    <property type="project" value="RGD"/>
</dbReference>
<dbReference type="GO" id="GO:0001895">
    <property type="term" value="P:retina homeostasis"/>
    <property type="evidence" value="ECO:0000250"/>
    <property type="project" value="UniProtKB"/>
</dbReference>
<dbReference type="GO" id="GO:0008090">
    <property type="term" value="P:retrograde axonal transport"/>
    <property type="evidence" value="ECO:0000266"/>
    <property type="project" value="RGD"/>
</dbReference>
<dbReference type="GO" id="GO:0007605">
    <property type="term" value="P:sensory perception of sound"/>
    <property type="evidence" value="ECO:0000250"/>
    <property type="project" value="UniProtKB"/>
</dbReference>
<dbReference type="GO" id="GO:0007283">
    <property type="term" value="P:spermatogenesis"/>
    <property type="evidence" value="ECO:0000250"/>
    <property type="project" value="UniProtKB"/>
</dbReference>
<dbReference type="GO" id="GO:0042554">
    <property type="term" value="P:superoxide anion generation"/>
    <property type="evidence" value="ECO:0000266"/>
    <property type="project" value="RGD"/>
</dbReference>
<dbReference type="GO" id="GO:0006801">
    <property type="term" value="P:superoxide metabolic process"/>
    <property type="evidence" value="ECO:0000314"/>
    <property type="project" value="RGD"/>
</dbReference>
<dbReference type="GO" id="GO:0019226">
    <property type="term" value="P:transmission of nerve impulse"/>
    <property type="evidence" value="ECO:0000250"/>
    <property type="project" value="UniProtKB"/>
</dbReference>
<dbReference type="CDD" id="cd00305">
    <property type="entry name" value="Cu-Zn_Superoxide_Dismutase"/>
    <property type="match status" value="1"/>
</dbReference>
<dbReference type="FunFam" id="2.60.40.200:FF:000001">
    <property type="entry name" value="Superoxide dismutase [Cu-Zn]"/>
    <property type="match status" value="1"/>
</dbReference>
<dbReference type="Gene3D" id="2.60.40.200">
    <property type="entry name" value="Superoxide dismutase, copper/zinc binding domain"/>
    <property type="match status" value="1"/>
</dbReference>
<dbReference type="InterPro" id="IPR036423">
    <property type="entry name" value="SOD-like_Cu/Zn_dom_sf"/>
</dbReference>
<dbReference type="InterPro" id="IPR024134">
    <property type="entry name" value="SOD_Cu/Zn_/chaperone"/>
</dbReference>
<dbReference type="InterPro" id="IPR018152">
    <property type="entry name" value="SOD_Cu/Zn_BS"/>
</dbReference>
<dbReference type="InterPro" id="IPR001424">
    <property type="entry name" value="SOD_Cu_Zn_dom"/>
</dbReference>
<dbReference type="PANTHER" id="PTHR10003">
    <property type="entry name" value="SUPEROXIDE DISMUTASE CU-ZN -RELATED"/>
    <property type="match status" value="1"/>
</dbReference>
<dbReference type="Pfam" id="PF00080">
    <property type="entry name" value="Sod_Cu"/>
    <property type="match status" value="1"/>
</dbReference>
<dbReference type="PRINTS" id="PR00068">
    <property type="entry name" value="CUZNDISMTASE"/>
</dbReference>
<dbReference type="SUPFAM" id="SSF49329">
    <property type="entry name" value="Cu,Zn superoxide dismutase-like"/>
    <property type="match status" value="1"/>
</dbReference>
<dbReference type="PROSITE" id="PS00087">
    <property type="entry name" value="SOD_CU_ZN_1"/>
    <property type="match status" value="1"/>
</dbReference>
<dbReference type="PROSITE" id="PS00332">
    <property type="entry name" value="SOD_CU_ZN_2"/>
    <property type="match status" value="1"/>
</dbReference>
<comment type="function">
    <text>Destroys radicals which are normally produced within the cells and which are toxic to biological systems.</text>
</comment>
<comment type="catalytic activity">
    <reaction evidence="9">
        <text>2 superoxide + 2 H(+) = H2O2 + O2</text>
        <dbReference type="Rhea" id="RHEA:20696"/>
        <dbReference type="ChEBI" id="CHEBI:15378"/>
        <dbReference type="ChEBI" id="CHEBI:15379"/>
        <dbReference type="ChEBI" id="CHEBI:16240"/>
        <dbReference type="ChEBI" id="CHEBI:18421"/>
        <dbReference type="EC" id="1.15.1.1"/>
    </reaction>
    <physiologicalReaction direction="left-to-right" evidence="9">
        <dbReference type="Rhea" id="RHEA:20697"/>
    </physiologicalReaction>
</comment>
<comment type="cofactor">
    <cofactor evidence="1">
        <name>Cu cation</name>
        <dbReference type="ChEBI" id="CHEBI:23378"/>
    </cofactor>
    <text evidence="1">Binds 1 copper ion per subunit.</text>
</comment>
<comment type="cofactor">
    <cofactor evidence="1">
        <name>Zn(2+)</name>
        <dbReference type="ChEBI" id="CHEBI:29105"/>
    </cofactor>
    <text evidence="1">Binds 1 zinc ion per subunit.</text>
</comment>
<comment type="subunit">
    <text evidence="2 4">Homodimer; non-disulfide-linked (By similarity). Heterodimer with SOD1. The heterodimer CCS:SOD1 interacts with SLC31A1; this heterotrimer is Cu(1+)-mediated and its maintenance is regulated through SOD1 activation (By similarity).</text>
</comment>
<comment type="subcellular location">
    <subcellularLocation>
        <location>Cytoplasm</location>
    </subcellularLocation>
    <subcellularLocation>
        <location evidence="1">Nucleus</location>
    </subcellularLocation>
</comment>
<comment type="tissue specificity">
    <text evidence="5">Expressed in lungs.</text>
</comment>
<comment type="induction">
    <text evidence="5">Expression is induced by hypoxia.</text>
</comment>
<comment type="PTM">
    <text evidence="1">Palmitoylation helps nuclear targeting and decreases catalytic activity.</text>
</comment>
<comment type="PTM">
    <text evidence="2">Succinylation, adjacent to copper catalytic site, probably inhibits activity. Desuccinylation by SIRT5 enhances activity.</text>
</comment>
<comment type="similarity">
    <text evidence="8">Belongs to the Cu-Zn superoxide dismutase family.</text>
</comment>
<comment type="sequence caution" evidence="8">
    <conflict type="erroneous initiation">
        <sequence resource="EMBL-CDS" id="AAA42160"/>
    </conflict>
    <text>Extended N-terminus.</text>
</comment>
<comment type="sequence caution" evidence="8">
    <conflict type="erroneous initiation">
        <sequence resource="EMBL-CDS" id="CAA79925"/>
    </conflict>
    <text>Extended N-terminus.</text>
</comment>
<gene>
    <name evidence="10" type="primary">Sod1</name>
</gene>
<reference key="1">
    <citation type="journal article" date="1987" name="Nucleic Acids Res.">
        <title>cDNA and deduced amino acid sequence of rat copper-zinc-containing superoxide dismutase.</title>
        <authorList>
            <person name="Ho Y.-S."/>
            <person name="Crapo J.D."/>
        </authorList>
    </citation>
    <scope>NUCLEOTIDE SEQUENCE [MRNA]</scope>
    <source>
        <strain>Sprague-Dawley</strain>
        <tissue>Liver</tissue>
    </source>
</reference>
<reference key="2">
    <citation type="journal article" date="1989" name="J. Clin. Invest.">
        <title>Rat lung Cu,Zn superoxide dismutase. Isolation and sequence of a full-length cDNA and studies of enzyme induction.</title>
        <authorList>
            <person name="Hass M.A."/>
            <person name="Iqbal J."/>
            <person name="Clerch L.B."/>
            <person name="Frank L."/>
            <person name="Massaro D."/>
        </authorList>
    </citation>
    <scope>NUCLEOTIDE SEQUENCE [MRNA]</scope>
    <scope>TISSUE SPECIFICITY</scope>
    <scope>INDUCTION BY HYPOXIA</scope>
    <scope>CATALYTIC ACTIVITY</scope>
    <source>
        <tissue>Lung</tissue>
    </source>
</reference>
<reference key="3">
    <citation type="journal article" date="1992" name="Biochem. Biophys. Res. Commun.">
        <title>Rat copper/zinc superoxide dismutase gene: isolation, characterization, and species comparison.</title>
        <authorList>
            <person name="Hsu J.L."/>
            <person name="Visner G.A."/>
            <person name="Burr I.A."/>
            <person name="Nick H.S."/>
        </authorList>
    </citation>
    <scope>NUCLEOTIDE SEQUENCE</scope>
</reference>
<reference key="4">
    <citation type="journal article" date="1993" name="Gene">
        <title>Isolation and analysis of the rat genomic sequence encoding Cu/Zn superoxide dismutase.</title>
        <authorList>
            <person name="Kim Y.H."/>
            <person name="Yoo H.Y."/>
            <person name="Jung G."/>
            <person name="Kim J.Y."/>
            <person name="Rho H.M."/>
        </authorList>
    </citation>
    <scope>NUCLEOTIDE SEQUENCE [GENOMIC DNA]</scope>
    <source>
        <strain>Sprague-Dawley</strain>
        <tissue>Liver</tissue>
    </source>
</reference>
<reference key="5">
    <citation type="journal article" date="2004" name="Genome Res.">
        <title>The status, quality, and expansion of the NIH full-length cDNA project: the Mammalian Gene Collection (MGC).</title>
        <authorList>
            <consortium name="The MGC Project Team"/>
        </authorList>
    </citation>
    <scope>NUCLEOTIDE SEQUENCE [LARGE SCALE MRNA]</scope>
    <source>
        <tissue>Ovary</tissue>
    </source>
</reference>
<reference key="6">
    <citation type="journal article" date="1986" name="Biol. Chem. Hoppe-Seyler">
        <title>The amino-acid sequence of rat Cu-Zn superoxide dismutase.</title>
        <authorList>
            <person name="Steffens G.J."/>
            <person name="Michelson A.M."/>
            <person name="Puget K."/>
            <person name="Flohe L."/>
        </authorList>
    </citation>
    <scope>PROTEIN SEQUENCE OF 2-154</scope>
</reference>
<reference key="7">
    <citation type="journal article" date="1987" name="Eur. J. Biochem.">
        <title>Cloning and sequencing of a rat CuZn superoxide dismutase cDNA. Correlation between CuZn superoxide dismutase mRNA level and enzyme activity in rat and mouse tissues.</title>
        <authorList>
            <person name="Delabar J.-M."/>
            <person name="Nicole A."/>
            <person name="D'Auriol L."/>
            <person name="Jacob Y."/>
            <person name="Meunier-Rotival M."/>
            <person name="Galibert F."/>
            <person name="Sinet P.-M."/>
            <person name="Jerome H."/>
        </authorList>
    </citation>
    <scope>NUCLEOTIDE SEQUENCE [MRNA] OF 4-154</scope>
    <source>
        <tissue>Liver</tissue>
    </source>
</reference>
<reference key="8">
    <citation type="journal article" date="1996" name="Nature">
        <title>Superoxide dismutase protects calcineurin from inactivation.</title>
        <authorList>
            <person name="Wang X."/>
            <person name="Culotta V.C."/>
            <person name="Klee C.B."/>
        </authorList>
    </citation>
    <scope>PROTEIN SEQUENCE OF 2-21 AND 93-103</scope>
</reference>
<reference key="9">
    <citation type="submission" date="2007-09" db="UniProtKB">
        <authorList>
            <person name="Lubec G."/>
            <person name="Afjehi-Sadat L."/>
            <person name="Diao W."/>
            <person name="Kang S.U."/>
            <person name="Lubec S."/>
        </authorList>
    </citation>
    <scope>PROTEIN SEQUENCE OF 11-24; 81-116 AND 145-154</scope>
    <scope>IDENTIFICATION BY MASS SPECTROMETRY</scope>
    <source>
        <strain>Sprague-Dawley</strain>
        <tissue>Brain</tissue>
        <tissue>Hippocampus</tissue>
        <tissue>Spinal cord</tissue>
    </source>
</reference>
<reference key="10">
    <citation type="journal article" date="2012" name="Nat. Commun.">
        <title>Quantitative maps of protein phosphorylation sites across 14 different rat organs and tissues.</title>
        <authorList>
            <person name="Lundby A."/>
            <person name="Secher A."/>
            <person name="Lage K."/>
            <person name="Nordsborg N.B."/>
            <person name="Dmytriyev A."/>
            <person name="Lundby C."/>
            <person name="Olsen J.V."/>
        </authorList>
    </citation>
    <scope>PHOSPHORYLATION [LARGE SCALE ANALYSIS] AT SER-99; SER-106 AND SER-108</scope>
    <scope>IDENTIFICATION BY MASS SPECTROMETRY [LARGE SCALE ANALYSIS]</scope>
</reference>
<sequence>MAMKAVCVLKGDGPVQGVIHFEQKASGEPVVVSGQITGLTEGEHGFHVHQYGDNTQGCTTAGPHFNPHSKKHGGPADEERHVGDLGNVAAGKDGVANVSIEDRVISLSGEHSIIGRTMVVHEKQDDLGKGGNEESTKTGNAGSRLACGVIGIAQ</sequence>
<proteinExistence type="evidence at protein level"/>
<accession>P07632</accession>